<proteinExistence type="evidence at protein level"/>
<reference key="1">
    <citation type="journal article" date="2016" name="Parasit. Vectors">
        <title>Transmembrane protein 147 (TMEM147): another partner protein of Haemonchus contortus galectin on the goat peripheral blood mononuclear cells (PBMC).</title>
        <authorList>
            <person name="Li Y."/>
            <person name="Yuan C."/>
            <person name="Wang L."/>
            <person name="Lu M."/>
            <person name="Wang Y."/>
            <person name="Wen Y."/>
            <person name="Yan R."/>
            <person name="Xu L."/>
            <person name="Song X."/>
            <person name="Li X."/>
        </authorList>
    </citation>
    <scope>NUCLEOTIDE SEQUENCE [MRNA]</scope>
    <scope>FUNCTION (MICROBIAL INFECTION)</scope>
    <scope>SUBCELLULAR LOCATION</scope>
    <scope>INTERACTION WITH H.CONTORTUS GAL-1</scope>
    <scope>TISSUE SPECIFICITY</scope>
</reference>
<reference key="2">
    <citation type="submission" date="2016-04" db="EMBL/GenBank/DDBJ databases">
        <title>Polished mammalian reference genomes with single-molecule sequencing and chromosome conformation capture applied to the Capra hircus genome.</title>
        <authorList>
            <person name="Bickhart D.M."/>
            <person name="Koren S."/>
            <person name="Rosen B."/>
            <person name="Hastie A."/>
            <person name="Liachko I."/>
            <person name="Sullivan S.T."/>
            <person name="Burton J."/>
            <person name="Sayre B.L."/>
            <person name="Huson H.J."/>
            <person name="Lee J."/>
            <person name="Lam E."/>
            <person name="Kelley C.M."/>
            <person name="Hutchison J.L."/>
            <person name="Zhou Y."/>
            <person name="Sun J."/>
            <person name="Crisa A."/>
            <person name="Schwartz J.C."/>
            <person name="Hammond J.A."/>
            <person name="Schroeder S.G."/>
            <person name="Liu G.E."/>
            <person name="Dunham M."/>
            <person name="Shendure J."/>
            <person name="Sonstegard T.S."/>
            <person name="Phillippy A.M."/>
            <person name="Van Tassell C.P."/>
            <person name="Smith T.P."/>
        </authorList>
    </citation>
    <scope>NUCLEOTIDE SEQUENCE [LARGE SCALE GENOMIC DNA]</scope>
</reference>
<reference key="3">
    <citation type="journal article" date="2017" name="Parasit. Vectors">
        <title>The N- and C-terminal carbohydrate recognition domains of Haemonchus contortus galectin bind to distinct receptors of goat PBMC and contribute differently to its immunomodulatory functions in host-parasite interactions.</title>
        <authorList>
            <person name="Lu M."/>
            <person name="Tian X."/>
            <person name="Yang X."/>
            <person name="Yuan C."/>
            <person name="Ehsan M."/>
            <person name="Liu X."/>
            <person name="Yan R."/>
            <person name="Xu L."/>
            <person name="Song X."/>
            <person name="Li X."/>
        </authorList>
    </citation>
    <scope>INTERACTION WITH H.CONTORTUS GAL-1</scope>
</reference>
<accession>I6VSD2</accession>
<comment type="function">
    <text evidence="2">Component of the multi-pass translocon (MPT) complex that mediates insertion of multi-pass membrane proteins into the lipid bilayer of membranes. The MPT complex takes over after the SEC61 complex: following membrane insertion of the first few transmembrane segments of proteins by the SEC61 complex, the MPT complex occludes the lateral gate of the SEC61 complex to promote insertion of subsequent transmembrane regions. Also acts as a negative regulator of CHRM3 function, most likely by interfering with its trafficking to the cell membrane. Negatively regulates CHRM3-mediated calcium mobilization and activation of RPS6KA1/p90RSK activity. Regulates LBR localization to the nucleus inner membrane.</text>
</comment>
<comment type="function">
    <text evidence="4">(Microbial infection) Involved in the immunomodulatory effects exerted by H.contortus GAL-1 on host peripheral blood mononuclear cells to down-regulate host immune response.</text>
</comment>
<comment type="subunit">
    <text evidence="2">Component of the back of Sec61 (BOS) complex, composed of NCLN/Nicalin, NOMO (NOMO1, NOMO2 or NOMO3) and TMEM147. The BOS complex is part of the multi-pass translocon (MPT) complex, composed of three subcomplexes, the GEL complex (composed of RAB5IF/OPTI and TMCO1), the BOS complex (composed of NCLN/Nicalin, NOMO and TMEM147) and the PAT complex (composed of WDR83OS/Asterix and CCDC47). The MPT complex associates with the SEC61 complex. Interacts with CHRM3, CHRM1 and AVPR2. Interacts with LBR; promoting LBR localization to the nucleus inner membrane. Interacts with DHCR7.</text>
</comment>
<comment type="subunit">
    <text evidence="4">(Microbial infection) Interacts with H.contortus GAL-1 (via domain galectin 2).</text>
</comment>
<comment type="subcellular location">
    <subcellularLocation>
        <location evidence="2">Endoplasmic reticulum membrane</location>
        <topology evidence="3">Multi-pass membrane protein</topology>
    </subcellularLocation>
    <subcellularLocation>
        <location evidence="2">Nucleus membrane</location>
        <topology evidence="3">Multi-pass membrane protein</topology>
    </subcellularLocation>
    <subcellularLocation>
        <location evidence="4">Cell membrane</location>
        <topology evidence="3">Multi-pass membrane protein</topology>
    </subcellularLocation>
</comment>
<comment type="tissue specificity">
    <text evidence="4">Expressed in T-cells, B-cells and monocytes.</text>
</comment>
<comment type="similarity">
    <text evidence="6">Belongs to the TMEM147 family.</text>
</comment>
<sequence length="224" mass="25321">MTLFHFGNCFALAYFPYFITYKCSGLSEYNAFWKCVQAGVTYLFVQLCKMLFLATFFPTWEGGIYDFIGEFMKASVDVADLIGLNLVMSRNAGKGEYKIMVAALGWATAELIMSRCIPLWVGARGIEFDWKYIQMSIDSNISLVHYIVASAQVWMITRYDLYHTYRPAVLLLMFLSVYKAFVMETFVHLCSLGSWTALLARALVTGLLALSTLALYVAVVNVHS</sequence>
<feature type="chain" id="PRO_0000448884" description="BOS complex subunit TMEM147">
    <location>
        <begin position="1"/>
        <end position="224"/>
    </location>
</feature>
<feature type="transmembrane region" description="Helical" evidence="1">
    <location>
        <begin position="1"/>
        <end position="21"/>
    </location>
</feature>
<feature type="topological domain" description="Cytoplasmic" evidence="1">
    <location>
        <begin position="22"/>
        <end position="34"/>
    </location>
</feature>
<feature type="transmembrane region" description="Helical" evidence="1">
    <location>
        <begin position="35"/>
        <end position="58"/>
    </location>
</feature>
<feature type="topological domain" description="Lumenal" evidence="1">
    <location>
        <begin position="59"/>
        <end position="66"/>
    </location>
</feature>
<feature type="transmembrane region" description="Helical" evidence="1">
    <location>
        <begin position="67"/>
        <end position="88"/>
    </location>
</feature>
<feature type="topological domain" description="Cytoplasmic" evidence="1">
    <location>
        <begin position="89"/>
        <end position="98"/>
    </location>
</feature>
<feature type="transmembrane region" description="Helical" evidence="1">
    <location>
        <begin position="99"/>
        <end position="124"/>
    </location>
</feature>
<feature type="topological domain" description="Lumenal" evidence="1">
    <location>
        <begin position="125"/>
        <end position="129"/>
    </location>
</feature>
<feature type="transmembrane region" description="Helical" evidence="1">
    <location>
        <begin position="130"/>
        <end position="155"/>
    </location>
</feature>
<feature type="topological domain" description="Cytoplasmic" evidence="1">
    <location>
        <begin position="156"/>
        <end position="164"/>
    </location>
</feature>
<feature type="transmembrane region" description="Helical" evidence="1">
    <location>
        <begin position="165"/>
        <end position="187"/>
    </location>
</feature>
<feature type="topological domain" description="Lumenal" evidence="1">
    <location>
        <begin position="188"/>
        <end position="194"/>
    </location>
</feature>
<feature type="transmembrane region" description="Helical" evidence="1">
    <location>
        <begin position="195"/>
        <end position="216"/>
    </location>
</feature>
<feature type="topological domain" description="Cytoplasmic" evidence="1">
    <location>
        <begin position="217"/>
        <end position="224"/>
    </location>
</feature>
<name>TM147_CAPHI</name>
<dbReference type="EMBL" id="LWLT01000020">
    <property type="status" value="NOT_ANNOTATED_CDS"/>
    <property type="molecule type" value="Genomic_DNA"/>
</dbReference>
<dbReference type="EMBL" id="JQ923484">
    <property type="protein sequence ID" value="AFN27531.1"/>
    <property type="molecule type" value="mRNA"/>
</dbReference>
<dbReference type="RefSeq" id="NP_001301238.1">
    <property type="nucleotide sequence ID" value="NM_001314309.1"/>
</dbReference>
<dbReference type="SMR" id="I6VSD2"/>
<dbReference type="STRING" id="9925.ENSCHIP00000026618"/>
<dbReference type="Ensembl" id="ENSCHIT00000034483.1">
    <property type="protein sequence ID" value="ENSCHIP00000026618.1"/>
    <property type="gene ID" value="ENSCHIG00000022872.1"/>
</dbReference>
<dbReference type="Ensembl" id="ENSCHIT00020056770">
    <property type="protein sequence ID" value="ENSCHIP00020043517"/>
    <property type="gene ID" value="ENSCHIG00020027435"/>
</dbReference>
<dbReference type="Ensembl" id="ENSCHIT00040059210">
    <property type="protein sequence ID" value="ENSCHIP00040047157"/>
    <property type="gene ID" value="ENSCHIG00040027677"/>
</dbReference>
<dbReference type="GeneID" id="102181068"/>
<dbReference type="KEGG" id="chx:102181068"/>
<dbReference type="CTD" id="10430"/>
<dbReference type="GeneTree" id="ENSGT00390000013276"/>
<dbReference type="OMA" id="SKCVYAG"/>
<dbReference type="OrthoDB" id="9993532at2759"/>
<dbReference type="Proteomes" id="UP000291000">
    <property type="component" value="Chromosome 18"/>
</dbReference>
<dbReference type="Proteomes" id="UP000694566">
    <property type="component" value="Unplaced"/>
</dbReference>
<dbReference type="Bgee" id="ENSCHIG00000022872">
    <property type="expression patterns" value="Expressed in longissimus thoracis muscle and 18 other cell types or tissues"/>
</dbReference>
<dbReference type="GO" id="GO:0005789">
    <property type="term" value="C:endoplasmic reticulum membrane"/>
    <property type="evidence" value="ECO:0000250"/>
    <property type="project" value="UniProtKB"/>
</dbReference>
<dbReference type="GO" id="GO:0160064">
    <property type="term" value="C:multi-pass translocon complex"/>
    <property type="evidence" value="ECO:0007669"/>
    <property type="project" value="Ensembl"/>
</dbReference>
<dbReference type="GO" id="GO:0031965">
    <property type="term" value="C:nuclear membrane"/>
    <property type="evidence" value="ECO:0000250"/>
    <property type="project" value="UniProtKB"/>
</dbReference>
<dbReference type="GO" id="GO:0005886">
    <property type="term" value="C:plasma membrane"/>
    <property type="evidence" value="ECO:0000314"/>
    <property type="project" value="UniProtKB"/>
</dbReference>
<dbReference type="GO" id="GO:0043022">
    <property type="term" value="F:ribosome binding"/>
    <property type="evidence" value="ECO:0000250"/>
    <property type="project" value="UniProtKB"/>
</dbReference>
<dbReference type="GO" id="GO:0160063">
    <property type="term" value="P:multi-pass transmembrane protein insertion into ER membrane"/>
    <property type="evidence" value="ECO:0000250"/>
    <property type="project" value="UniProtKB"/>
</dbReference>
<dbReference type="GO" id="GO:0036228">
    <property type="term" value="P:protein localization to nuclear inner membrane"/>
    <property type="evidence" value="ECO:0000250"/>
    <property type="project" value="UniProtKB"/>
</dbReference>
<dbReference type="GO" id="GO:0042981">
    <property type="term" value="P:regulation of apoptotic process"/>
    <property type="evidence" value="ECO:0000315"/>
    <property type="project" value="UniProtKB"/>
</dbReference>
<dbReference type="GO" id="GO:0001817">
    <property type="term" value="P:regulation of cytokine production"/>
    <property type="evidence" value="ECO:0000315"/>
    <property type="project" value="UniProtKB"/>
</dbReference>
<dbReference type="GO" id="GO:0032944">
    <property type="term" value="P:regulation of mononuclear cell proliferation"/>
    <property type="evidence" value="ECO:0000315"/>
    <property type="project" value="UniProtKB"/>
</dbReference>
<dbReference type="GO" id="GO:0045428">
    <property type="term" value="P:regulation of nitric oxide biosynthetic process"/>
    <property type="evidence" value="ECO:0000315"/>
    <property type="project" value="UniProtKB"/>
</dbReference>
<dbReference type="GO" id="GO:0050764">
    <property type="term" value="P:regulation of phagocytosis"/>
    <property type="evidence" value="ECO:0000315"/>
    <property type="project" value="UniProtKB"/>
</dbReference>
<dbReference type="InterPro" id="IPR019164">
    <property type="entry name" value="TMEM147"/>
</dbReference>
<dbReference type="PANTHER" id="PTHR12869:SF0">
    <property type="entry name" value="BOS COMPLEX SUBUNIT TMEM147"/>
    <property type="match status" value="1"/>
</dbReference>
<dbReference type="PANTHER" id="PTHR12869">
    <property type="entry name" value="SMALL SEVEN TRANSMEMBRANE DOMAIN-CONTAINING PROTEIN"/>
    <property type="match status" value="1"/>
</dbReference>
<dbReference type="Pfam" id="PF09767">
    <property type="entry name" value="DUF2053"/>
    <property type="match status" value="1"/>
</dbReference>
<keyword id="KW-1003">Cell membrane</keyword>
<keyword id="KW-0256">Endoplasmic reticulum</keyword>
<keyword id="KW-0472">Membrane</keyword>
<keyword id="KW-0539">Nucleus</keyword>
<keyword id="KW-1185">Reference proteome</keyword>
<keyword id="KW-0812">Transmembrane</keyword>
<keyword id="KW-1133">Transmembrane helix</keyword>
<gene>
    <name evidence="5" type="primary">TMEM147</name>
</gene>
<protein>
    <recommendedName>
        <fullName evidence="6">BOS complex subunit TMEM147</fullName>
    </recommendedName>
    <alternativeName>
        <fullName evidence="5">Transmembrane protein 147</fullName>
    </alternativeName>
</protein>
<organism>
    <name type="scientific">Capra hircus</name>
    <name type="common">Goat</name>
    <dbReference type="NCBI Taxonomy" id="9925"/>
    <lineage>
        <taxon>Eukaryota</taxon>
        <taxon>Metazoa</taxon>
        <taxon>Chordata</taxon>
        <taxon>Craniata</taxon>
        <taxon>Vertebrata</taxon>
        <taxon>Euteleostomi</taxon>
        <taxon>Mammalia</taxon>
        <taxon>Eutheria</taxon>
        <taxon>Laurasiatheria</taxon>
        <taxon>Artiodactyla</taxon>
        <taxon>Ruminantia</taxon>
        <taxon>Pecora</taxon>
        <taxon>Bovidae</taxon>
        <taxon>Caprinae</taxon>
        <taxon>Capra</taxon>
    </lineage>
</organism>
<evidence type="ECO:0000250" key="1">
    <source>
        <dbReference type="UniProtKB" id="A0A8I3MKU8"/>
    </source>
</evidence>
<evidence type="ECO:0000250" key="2">
    <source>
        <dbReference type="UniProtKB" id="Q9BVK8"/>
    </source>
</evidence>
<evidence type="ECO:0000255" key="3"/>
<evidence type="ECO:0000269" key="4">
    <source>
    </source>
</evidence>
<evidence type="ECO:0000303" key="5">
    <source>
    </source>
</evidence>
<evidence type="ECO:0000305" key="6"/>